<accession>Q6AQ12</accession>
<dbReference type="EC" id="7.1.2.2" evidence="1"/>
<dbReference type="EMBL" id="CR522870">
    <property type="protein sequence ID" value="CAG35561.1"/>
    <property type="molecule type" value="Genomic_DNA"/>
</dbReference>
<dbReference type="RefSeq" id="WP_011188077.1">
    <property type="nucleotide sequence ID" value="NC_006138.1"/>
</dbReference>
<dbReference type="SMR" id="Q6AQ12"/>
<dbReference type="STRING" id="177439.DP0832"/>
<dbReference type="KEGG" id="dps:DP0832"/>
<dbReference type="eggNOG" id="COG0056">
    <property type="taxonomic scope" value="Bacteria"/>
</dbReference>
<dbReference type="HOGENOM" id="CLU_010091_2_1_7"/>
<dbReference type="OrthoDB" id="9803053at2"/>
<dbReference type="Proteomes" id="UP000000602">
    <property type="component" value="Chromosome"/>
</dbReference>
<dbReference type="GO" id="GO:0005886">
    <property type="term" value="C:plasma membrane"/>
    <property type="evidence" value="ECO:0007669"/>
    <property type="project" value="UniProtKB-SubCell"/>
</dbReference>
<dbReference type="GO" id="GO:0045259">
    <property type="term" value="C:proton-transporting ATP synthase complex"/>
    <property type="evidence" value="ECO:0007669"/>
    <property type="project" value="UniProtKB-KW"/>
</dbReference>
<dbReference type="GO" id="GO:0043531">
    <property type="term" value="F:ADP binding"/>
    <property type="evidence" value="ECO:0007669"/>
    <property type="project" value="TreeGrafter"/>
</dbReference>
<dbReference type="GO" id="GO:0005524">
    <property type="term" value="F:ATP binding"/>
    <property type="evidence" value="ECO:0007669"/>
    <property type="project" value="UniProtKB-UniRule"/>
</dbReference>
<dbReference type="GO" id="GO:0046933">
    <property type="term" value="F:proton-transporting ATP synthase activity, rotational mechanism"/>
    <property type="evidence" value="ECO:0007669"/>
    <property type="project" value="UniProtKB-UniRule"/>
</dbReference>
<dbReference type="CDD" id="cd18113">
    <property type="entry name" value="ATP-synt_F1_alpha_C"/>
    <property type="match status" value="1"/>
</dbReference>
<dbReference type="CDD" id="cd18116">
    <property type="entry name" value="ATP-synt_F1_alpha_N"/>
    <property type="match status" value="1"/>
</dbReference>
<dbReference type="CDD" id="cd01132">
    <property type="entry name" value="F1-ATPase_alpha_CD"/>
    <property type="match status" value="1"/>
</dbReference>
<dbReference type="FunFam" id="1.20.150.20:FF:000001">
    <property type="entry name" value="ATP synthase subunit alpha"/>
    <property type="match status" value="1"/>
</dbReference>
<dbReference type="FunFam" id="2.40.30.20:FF:000001">
    <property type="entry name" value="ATP synthase subunit alpha"/>
    <property type="match status" value="1"/>
</dbReference>
<dbReference type="FunFam" id="3.40.50.300:FF:000002">
    <property type="entry name" value="ATP synthase subunit alpha"/>
    <property type="match status" value="1"/>
</dbReference>
<dbReference type="Gene3D" id="2.40.30.20">
    <property type="match status" value="1"/>
</dbReference>
<dbReference type="Gene3D" id="1.20.150.20">
    <property type="entry name" value="ATP synthase alpha/beta chain, C-terminal domain"/>
    <property type="match status" value="1"/>
</dbReference>
<dbReference type="Gene3D" id="3.40.50.300">
    <property type="entry name" value="P-loop containing nucleotide triphosphate hydrolases"/>
    <property type="match status" value="1"/>
</dbReference>
<dbReference type="HAMAP" id="MF_01346">
    <property type="entry name" value="ATP_synth_alpha_bact"/>
    <property type="match status" value="1"/>
</dbReference>
<dbReference type="InterPro" id="IPR023366">
    <property type="entry name" value="ATP_synth_asu-like_sf"/>
</dbReference>
<dbReference type="InterPro" id="IPR000793">
    <property type="entry name" value="ATP_synth_asu_C"/>
</dbReference>
<dbReference type="InterPro" id="IPR038376">
    <property type="entry name" value="ATP_synth_asu_C_sf"/>
</dbReference>
<dbReference type="InterPro" id="IPR033732">
    <property type="entry name" value="ATP_synth_F1_a_nt-bd_dom"/>
</dbReference>
<dbReference type="InterPro" id="IPR005294">
    <property type="entry name" value="ATP_synth_F1_asu"/>
</dbReference>
<dbReference type="InterPro" id="IPR020003">
    <property type="entry name" value="ATPase_a/bsu_AS"/>
</dbReference>
<dbReference type="InterPro" id="IPR004100">
    <property type="entry name" value="ATPase_F1/V1/A1_a/bsu_N"/>
</dbReference>
<dbReference type="InterPro" id="IPR036121">
    <property type="entry name" value="ATPase_F1/V1/A1_a/bsu_N_sf"/>
</dbReference>
<dbReference type="InterPro" id="IPR000194">
    <property type="entry name" value="ATPase_F1/V1/A1_a/bsu_nucl-bd"/>
</dbReference>
<dbReference type="InterPro" id="IPR027417">
    <property type="entry name" value="P-loop_NTPase"/>
</dbReference>
<dbReference type="NCBIfam" id="TIGR00962">
    <property type="entry name" value="atpA"/>
    <property type="match status" value="1"/>
</dbReference>
<dbReference type="NCBIfam" id="NF009884">
    <property type="entry name" value="PRK13343.1"/>
    <property type="match status" value="1"/>
</dbReference>
<dbReference type="PANTHER" id="PTHR48082">
    <property type="entry name" value="ATP SYNTHASE SUBUNIT ALPHA, MITOCHONDRIAL"/>
    <property type="match status" value="1"/>
</dbReference>
<dbReference type="PANTHER" id="PTHR48082:SF2">
    <property type="entry name" value="ATP SYNTHASE SUBUNIT ALPHA, MITOCHONDRIAL"/>
    <property type="match status" value="1"/>
</dbReference>
<dbReference type="Pfam" id="PF00006">
    <property type="entry name" value="ATP-synt_ab"/>
    <property type="match status" value="1"/>
</dbReference>
<dbReference type="Pfam" id="PF00306">
    <property type="entry name" value="ATP-synt_ab_C"/>
    <property type="match status" value="1"/>
</dbReference>
<dbReference type="Pfam" id="PF02874">
    <property type="entry name" value="ATP-synt_ab_N"/>
    <property type="match status" value="1"/>
</dbReference>
<dbReference type="PIRSF" id="PIRSF039088">
    <property type="entry name" value="F_ATPase_subunit_alpha"/>
    <property type="match status" value="1"/>
</dbReference>
<dbReference type="SUPFAM" id="SSF47917">
    <property type="entry name" value="C-terminal domain of alpha and beta subunits of F1 ATP synthase"/>
    <property type="match status" value="1"/>
</dbReference>
<dbReference type="SUPFAM" id="SSF50615">
    <property type="entry name" value="N-terminal domain of alpha and beta subunits of F1 ATP synthase"/>
    <property type="match status" value="1"/>
</dbReference>
<dbReference type="SUPFAM" id="SSF52540">
    <property type="entry name" value="P-loop containing nucleoside triphosphate hydrolases"/>
    <property type="match status" value="1"/>
</dbReference>
<dbReference type="PROSITE" id="PS00152">
    <property type="entry name" value="ATPASE_ALPHA_BETA"/>
    <property type="match status" value="1"/>
</dbReference>
<organism>
    <name type="scientific">Desulfotalea psychrophila (strain LSv54 / DSM 12343)</name>
    <dbReference type="NCBI Taxonomy" id="177439"/>
    <lineage>
        <taxon>Bacteria</taxon>
        <taxon>Pseudomonadati</taxon>
        <taxon>Thermodesulfobacteriota</taxon>
        <taxon>Desulfobulbia</taxon>
        <taxon>Desulfobulbales</taxon>
        <taxon>Desulfocapsaceae</taxon>
        <taxon>Desulfotalea</taxon>
    </lineage>
</organism>
<gene>
    <name evidence="1" type="primary">atpA</name>
    <name type="ordered locus">DP0832</name>
</gene>
<keyword id="KW-0066">ATP synthesis</keyword>
<keyword id="KW-0067">ATP-binding</keyword>
<keyword id="KW-0997">Cell inner membrane</keyword>
<keyword id="KW-1003">Cell membrane</keyword>
<keyword id="KW-0139">CF(1)</keyword>
<keyword id="KW-0375">Hydrogen ion transport</keyword>
<keyword id="KW-0406">Ion transport</keyword>
<keyword id="KW-0472">Membrane</keyword>
<keyword id="KW-0547">Nucleotide-binding</keyword>
<keyword id="KW-1185">Reference proteome</keyword>
<keyword id="KW-1278">Translocase</keyword>
<keyword id="KW-0813">Transport</keyword>
<protein>
    <recommendedName>
        <fullName evidence="1">ATP synthase subunit alpha</fullName>
        <ecNumber evidence="1">7.1.2.2</ecNumber>
    </recommendedName>
    <alternativeName>
        <fullName evidence="1">ATP synthase F1 sector subunit alpha</fullName>
    </alternativeName>
    <alternativeName>
        <fullName evidence="1">F-ATPase subunit alpha</fullName>
    </alternativeName>
</protein>
<reference key="1">
    <citation type="journal article" date="2004" name="Environ. Microbiol.">
        <title>The genome of Desulfotalea psychrophila, a sulfate-reducing bacterium from permanently cold Arctic sediments.</title>
        <authorList>
            <person name="Rabus R."/>
            <person name="Ruepp A."/>
            <person name="Frickey T."/>
            <person name="Rattei T."/>
            <person name="Fartmann B."/>
            <person name="Stark M."/>
            <person name="Bauer M."/>
            <person name="Zibat A."/>
            <person name="Lombardot T."/>
            <person name="Becker I."/>
            <person name="Amann J."/>
            <person name="Gellner K."/>
            <person name="Teeling H."/>
            <person name="Leuschner W.D."/>
            <person name="Gloeckner F.-O."/>
            <person name="Lupas A.N."/>
            <person name="Amann R."/>
            <person name="Klenk H.-P."/>
        </authorList>
    </citation>
    <scope>NUCLEOTIDE SEQUENCE [LARGE SCALE GENOMIC DNA]</scope>
    <source>
        <strain>DSM 12343 / LSv54</strain>
    </source>
</reference>
<evidence type="ECO:0000255" key="1">
    <source>
        <dbReference type="HAMAP-Rule" id="MF_01346"/>
    </source>
</evidence>
<name>ATPA_DESPS</name>
<comment type="function">
    <text evidence="1">Produces ATP from ADP in the presence of a proton gradient across the membrane. The alpha chain is a regulatory subunit.</text>
</comment>
<comment type="catalytic activity">
    <reaction evidence="1">
        <text>ATP + H2O + 4 H(+)(in) = ADP + phosphate + 5 H(+)(out)</text>
        <dbReference type="Rhea" id="RHEA:57720"/>
        <dbReference type="ChEBI" id="CHEBI:15377"/>
        <dbReference type="ChEBI" id="CHEBI:15378"/>
        <dbReference type="ChEBI" id="CHEBI:30616"/>
        <dbReference type="ChEBI" id="CHEBI:43474"/>
        <dbReference type="ChEBI" id="CHEBI:456216"/>
        <dbReference type="EC" id="7.1.2.2"/>
    </reaction>
</comment>
<comment type="subunit">
    <text evidence="1">F-type ATPases have 2 components, CF(1) - the catalytic core - and CF(0) - the membrane proton channel. CF(1) has five subunits: alpha(3), beta(3), gamma(1), delta(1), epsilon(1). CF(0) has three main subunits: a(1), b(2) and c(9-12). The alpha and beta chains form an alternating ring which encloses part of the gamma chain. CF(1) is attached to CF(0) by a central stalk formed by the gamma and epsilon chains, while a peripheral stalk is formed by the delta and b chains.</text>
</comment>
<comment type="subcellular location">
    <subcellularLocation>
        <location evidence="1">Cell inner membrane</location>
        <topology evidence="1">Peripheral membrane protein</topology>
    </subcellularLocation>
</comment>
<comment type="similarity">
    <text evidence="1">Belongs to the ATPase alpha/beta chains family.</text>
</comment>
<sequence>MQIKAEEISQIIKDQIGDYETSVDLNETGTVISVGDGIARIYGVQNCMAMELLEFPSGIMGLALNLEEDNVGCAVLGSVQGIKEGDIVKRTGKIAEVPVGPAMSGRVVDGLGKPIDGQGPINSDLTSKIEVVAPGVIARKGVHEPCYTGAKAVDAMTPVGRGQRELVIGDRQIGKTALCVDAIIAQKNTDVHCIYVAVGQKKSTVALVVEALRKHGAMEYTTVVAACASDPAPMQYIAPFAGCSMGEYYRDNGQHALIIYDDLSKQAVAYRELSLLLRRPPGREAYPGDIFFNHSRLLERASKVNDELGAGSLTALPIIETQAGDVSAFIPTNVISITDGQVYLEPNLFFSGVRPAVNIGLSVSRVGGSAQCKAMKQVAGTLRLDLAQYRELAAFAAFGSDLDVSTQAKLTRGERLVEILKQPQYQPLPMEKQVTILYAGSTGHLDSLPIGSLAAYEADLYDYLEANEPSVFTDLVAEQAFTDGIKEKLNKALTSFGETFKAIKGLK</sequence>
<feature type="chain" id="PRO_0000238241" description="ATP synthase subunit alpha">
    <location>
        <begin position="1"/>
        <end position="507"/>
    </location>
</feature>
<feature type="binding site" evidence="1">
    <location>
        <begin position="169"/>
        <end position="176"/>
    </location>
    <ligand>
        <name>ATP</name>
        <dbReference type="ChEBI" id="CHEBI:30616"/>
    </ligand>
</feature>
<feature type="site" description="Required for activity" evidence="1">
    <location>
        <position position="362"/>
    </location>
</feature>
<proteinExistence type="inferred from homology"/>